<feature type="chain" id="PRO_0000056277" description="E3 ubiquitin-protein ligase TRIM50">
    <location>
        <begin position="1"/>
        <end position="483"/>
    </location>
</feature>
<feature type="domain" description="B30.2/SPRY" evidence="6">
    <location>
        <begin position="275"/>
        <end position="474"/>
    </location>
</feature>
<feature type="zinc finger region" description="RING-type" evidence="5">
    <location>
        <begin position="16"/>
        <end position="57"/>
    </location>
</feature>
<feature type="zinc finger region" description="B box-type" evidence="4">
    <location>
        <begin position="84"/>
        <end position="125"/>
    </location>
</feature>
<feature type="coiled-coil region" evidence="3">
    <location>
        <begin position="127"/>
        <end position="169"/>
    </location>
</feature>
<feature type="coiled-coil region" evidence="3">
    <location>
        <begin position="203"/>
        <end position="236"/>
    </location>
</feature>
<feature type="binding site" evidence="4">
    <location>
        <position position="89"/>
    </location>
    <ligand>
        <name>Zn(2+)</name>
        <dbReference type="ChEBI" id="CHEBI:29105"/>
    </ligand>
</feature>
<feature type="binding site" evidence="4">
    <location>
        <position position="92"/>
    </location>
    <ligand>
        <name>Zn(2+)</name>
        <dbReference type="ChEBI" id="CHEBI:29105"/>
    </ligand>
</feature>
<feature type="binding site" evidence="4">
    <location>
        <position position="111"/>
    </location>
    <ligand>
        <name>Zn(2+)</name>
        <dbReference type="ChEBI" id="CHEBI:29105"/>
    </ligand>
</feature>
<feature type="binding site" evidence="4">
    <location>
        <position position="117"/>
    </location>
    <ligand>
        <name>Zn(2+)</name>
        <dbReference type="ChEBI" id="CHEBI:29105"/>
    </ligand>
</feature>
<feature type="modified residue" description="N6-acetyllysine" evidence="1">
    <location>
        <position position="372"/>
    </location>
</feature>
<comment type="function">
    <text evidence="2">E3 ubiquitin-protein ligase that ubiquitinates Beclin-1/BECN1 in a 'Lys-63'-dependent manner enhancing its binding to ULK1. In turn, promotes starvation-induced autophagy activation. Also interacts with p62/SQSTM1 protein and thereby induces the formation and the autophagy clearance of aggresome-associated polyubiquitinated proteins through HDAC6 interaction. Also promotes NLRP3 inflammasome activation by directly inducing NLRP3 oligomerization independent of its E3 ligase function (By similarity).</text>
</comment>
<comment type="catalytic activity">
    <reaction evidence="2">
        <text>S-ubiquitinyl-[E2 ubiquitin-conjugating enzyme]-L-cysteine + [acceptor protein]-L-lysine = [E2 ubiquitin-conjugating enzyme]-L-cysteine + N(6)-ubiquitinyl-[acceptor protein]-L-lysine.</text>
        <dbReference type="EC" id="2.3.2.27"/>
    </reaction>
</comment>
<comment type="subunit">
    <text evidence="1 2">Can form dimers and trimers. Interacts with several E2 ubiquitin-conjugating enzymes, including UBE2L6, UBE2E1, UBE2E3. No interaction with UBE2H. Interacts with BECN1. Interacts with SQSTM1. Interacts with NLRP3.</text>
</comment>
<comment type="subcellular location">
    <subcellularLocation>
        <location evidence="2">Cytoplasm</location>
    </subcellularLocation>
    <text evidence="2">Localizes mainly into discrete cytoplasmic punctuate structures heterogeneous in size and shape containing polyubiquitinated proteins.</text>
</comment>
<comment type="PTM">
    <text evidence="2">Auto-ubiquitinated.</text>
</comment>
<comment type="PTM">
    <text evidence="2">Acetylated by EP300 and KAT2B. HDAC6 drives TRIM50 deacetylation. Acetylation antagonizes with TRIM50 ubiquitination.</text>
</comment>
<comment type="similarity">
    <text evidence="7">Belongs to the TRIM/RBCC family.</text>
</comment>
<keyword id="KW-0007">Acetylation</keyword>
<keyword id="KW-0175">Coiled coil</keyword>
<keyword id="KW-0963">Cytoplasm</keyword>
<keyword id="KW-0479">Metal-binding</keyword>
<keyword id="KW-1185">Reference proteome</keyword>
<keyword id="KW-0808">Transferase</keyword>
<keyword id="KW-0832">Ubl conjugation</keyword>
<keyword id="KW-0833">Ubl conjugation pathway</keyword>
<keyword id="KW-0862">Zinc</keyword>
<keyword id="KW-0863">Zinc-finger</keyword>
<dbReference type="EC" id="2.3.2.27" evidence="2"/>
<dbReference type="EMBL" id="AY081950">
    <property type="protein sequence ID" value="AAL91073.1"/>
    <property type="molecule type" value="mRNA"/>
</dbReference>
<dbReference type="RefSeq" id="NP_851594.1">
    <property type="nucleotide sequence ID" value="NM_181080.2"/>
</dbReference>
<dbReference type="RefSeq" id="XP_006249191.1">
    <property type="nucleotide sequence ID" value="XM_006249129.3"/>
</dbReference>
<dbReference type="SMR" id="Q810I1"/>
<dbReference type="FunCoup" id="Q810I1">
    <property type="interactions" value="11"/>
</dbReference>
<dbReference type="STRING" id="10116.ENSRNOP00000036145"/>
<dbReference type="GlyGen" id="Q810I1">
    <property type="glycosylation" value="1 site"/>
</dbReference>
<dbReference type="PhosphoSitePlus" id="Q810I1"/>
<dbReference type="PaxDb" id="10116-ENSRNOP00000036145"/>
<dbReference type="GeneID" id="288596"/>
<dbReference type="KEGG" id="rno:288596"/>
<dbReference type="UCSC" id="RGD:631346">
    <property type="organism name" value="rat"/>
</dbReference>
<dbReference type="AGR" id="RGD:631346"/>
<dbReference type="CTD" id="135892"/>
<dbReference type="RGD" id="631346">
    <property type="gene designation" value="Trim50"/>
</dbReference>
<dbReference type="eggNOG" id="KOG2177">
    <property type="taxonomic scope" value="Eukaryota"/>
</dbReference>
<dbReference type="HOGENOM" id="CLU_013137_0_3_1"/>
<dbReference type="InParanoid" id="Q810I1"/>
<dbReference type="Reactome" id="R-RNO-983168">
    <property type="pathway name" value="Antigen processing: Ubiquitination &amp; Proteasome degradation"/>
</dbReference>
<dbReference type="PRO" id="PR:Q810I1"/>
<dbReference type="Proteomes" id="UP000002494">
    <property type="component" value="Unplaced"/>
</dbReference>
<dbReference type="GO" id="GO:0016235">
    <property type="term" value="C:aggresome"/>
    <property type="evidence" value="ECO:0000266"/>
    <property type="project" value="RGD"/>
</dbReference>
<dbReference type="GO" id="GO:0005737">
    <property type="term" value="C:cytoplasm"/>
    <property type="evidence" value="ECO:0000318"/>
    <property type="project" value="GO_Central"/>
</dbReference>
<dbReference type="GO" id="GO:0042802">
    <property type="term" value="F:identical protein binding"/>
    <property type="evidence" value="ECO:0000266"/>
    <property type="project" value="RGD"/>
</dbReference>
<dbReference type="GO" id="GO:0061630">
    <property type="term" value="F:ubiquitin protein ligase activity"/>
    <property type="evidence" value="ECO:0000318"/>
    <property type="project" value="GO_Central"/>
</dbReference>
<dbReference type="GO" id="GO:0008270">
    <property type="term" value="F:zinc ion binding"/>
    <property type="evidence" value="ECO:0007669"/>
    <property type="project" value="UniProtKB-KW"/>
</dbReference>
<dbReference type="GO" id="GO:0045087">
    <property type="term" value="P:innate immune response"/>
    <property type="evidence" value="ECO:0000318"/>
    <property type="project" value="GO_Central"/>
</dbReference>
<dbReference type="GO" id="GO:0070201">
    <property type="term" value="P:regulation of establishment of protein localization"/>
    <property type="evidence" value="ECO:0000266"/>
    <property type="project" value="RGD"/>
</dbReference>
<dbReference type="CDD" id="cd16605">
    <property type="entry name" value="RING-HC_TRIM50_like_C-IV"/>
    <property type="match status" value="1"/>
</dbReference>
<dbReference type="CDD" id="cd13743">
    <property type="entry name" value="SPRY_PRY_TRIM50"/>
    <property type="match status" value="1"/>
</dbReference>
<dbReference type="FunFam" id="2.60.120.920:FF:000027">
    <property type="entry name" value="E3 ubiquitin-protein ligase TRIM50"/>
    <property type="match status" value="1"/>
</dbReference>
<dbReference type="Gene3D" id="2.60.120.920">
    <property type="match status" value="1"/>
</dbReference>
<dbReference type="Gene3D" id="3.30.160.60">
    <property type="entry name" value="Classic Zinc Finger"/>
    <property type="match status" value="1"/>
</dbReference>
<dbReference type="Gene3D" id="3.30.40.10">
    <property type="entry name" value="Zinc/RING finger domain, C3HC4 (zinc finger)"/>
    <property type="match status" value="1"/>
</dbReference>
<dbReference type="InterPro" id="IPR001870">
    <property type="entry name" value="B30.2/SPRY"/>
</dbReference>
<dbReference type="InterPro" id="IPR043136">
    <property type="entry name" value="B30.2/SPRY_sf"/>
</dbReference>
<dbReference type="InterPro" id="IPR003879">
    <property type="entry name" value="Butyrophylin_SPRY"/>
</dbReference>
<dbReference type="InterPro" id="IPR013320">
    <property type="entry name" value="ConA-like_dom_sf"/>
</dbReference>
<dbReference type="InterPro" id="IPR006574">
    <property type="entry name" value="PRY"/>
</dbReference>
<dbReference type="InterPro" id="IPR003877">
    <property type="entry name" value="SPRY_dom"/>
</dbReference>
<dbReference type="InterPro" id="IPR050143">
    <property type="entry name" value="TRIM/RBCC"/>
</dbReference>
<dbReference type="InterPro" id="IPR027370">
    <property type="entry name" value="Znf-RING_euk"/>
</dbReference>
<dbReference type="InterPro" id="IPR000315">
    <property type="entry name" value="Znf_B-box"/>
</dbReference>
<dbReference type="InterPro" id="IPR001841">
    <property type="entry name" value="Znf_RING"/>
</dbReference>
<dbReference type="InterPro" id="IPR013083">
    <property type="entry name" value="Znf_RING/FYVE/PHD"/>
</dbReference>
<dbReference type="InterPro" id="IPR017907">
    <property type="entry name" value="Znf_RING_CS"/>
</dbReference>
<dbReference type="PANTHER" id="PTHR24103">
    <property type="entry name" value="E3 UBIQUITIN-PROTEIN LIGASE TRIM"/>
    <property type="match status" value="1"/>
</dbReference>
<dbReference type="Pfam" id="PF13765">
    <property type="entry name" value="PRY"/>
    <property type="match status" value="1"/>
</dbReference>
<dbReference type="Pfam" id="PF00622">
    <property type="entry name" value="SPRY"/>
    <property type="match status" value="1"/>
</dbReference>
<dbReference type="Pfam" id="PF00643">
    <property type="entry name" value="zf-B_box"/>
    <property type="match status" value="1"/>
</dbReference>
<dbReference type="Pfam" id="PF13445">
    <property type="entry name" value="zf-RING_UBOX"/>
    <property type="match status" value="1"/>
</dbReference>
<dbReference type="PRINTS" id="PR01407">
    <property type="entry name" value="BUTYPHLNCDUF"/>
</dbReference>
<dbReference type="SMART" id="SM00336">
    <property type="entry name" value="BBOX"/>
    <property type="match status" value="1"/>
</dbReference>
<dbReference type="SMART" id="SM00589">
    <property type="entry name" value="PRY"/>
    <property type="match status" value="1"/>
</dbReference>
<dbReference type="SMART" id="SM00184">
    <property type="entry name" value="RING"/>
    <property type="match status" value="1"/>
</dbReference>
<dbReference type="SMART" id="SM00449">
    <property type="entry name" value="SPRY"/>
    <property type="match status" value="1"/>
</dbReference>
<dbReference type="SUPFAM" id="SSF57845">
    <property type="entry name" value="B-box zinc-binding domain"/>
    <property type="match status" value="1"/>
</dbReference>
<dbReference type="SUPFAM" id="SSF49899">
    <property type="entry name" value="Concanavalin A-like lectins/glucanases"/>
    <property type="match status" value="1"/>
</dbReference>
<dbReference type="SUPFAM" id="SSF57850">
    <property type="entry name" value="RING/U-box"/>
    <property type="match status" value="1"/>
</dbReference>
<dbReference type="PROSITE" id="PS50188">
    <property type="entry name" value="B302_SPRY"/>
    <property type="match status" value="1"/>
</dbReference>
<dbReference type="PROSITE" id="PS50119">
    <property type="entry name" value="ZF_BBOX"/>
    <property type="match status" value="1"/>
</dbReference>
<dbReference type="PROSITE" id="PS00518">
    <property type="entry name" value="ZF_RING_1"/>
    <property type="match status" value="1"/>
</dbReference>
<dbReference type="PROSITE" id="PS50089">
    <property type="entry name" value="ZF_RING_2"/>
    <property type="match status" value="1"/>
</dbReference>
<reference key="1">
    <citation type="submission" date="2002-03" db="EMBL/GenBank/DDBJ databases">
        <title>Novel genes in the Williams-Beuren Syndrome critical region.</title>
        <authorList>
            <person name="Ucla C."/>
            <person name="Merla G."/>
            <person name="Meroni G."/>
            <person name="Reymond A."/>
        </authorList>
    </citation>
    <scope>NUCLEOTIDE SEQUENCE [MRNA]</scope>
</reference>
<accession>Q810I1</accession>
<gene>
    <name type="primary">Trim50</name>
</gene>
<protein>
    <recommendedName>
        <fullName>E3 ubiquitin-protein ligase TRIM50</fullName>
        <ecNumber evidence="2">2.3.2.27</ecNumber>
    </recommendedName>
    <alternativeName>
        <fullName evidence="7">RING-type E3 ubiquitin transferase TRIM50</fullName>
    </alternativeName>
    <alternativeName>
        <fullName>Tripartite motif-containing protein 50</fullName>
    </alternativeName>
</protein>
<sequence>MAWQLTVPELQDQLQCPICLEVFKEPLMLQCGHSYCKNCLDSLSEHLDSELRCPVCRQSVDCSSSPPNVSLARVIDALRLPGDTEPTVCVHHRNPLSLFCEKDQEFICGLCGLLGSHQHHRVTPVSTVYSRMKEELAGRLSELKEQHRDVEEHIGKLVNNRTRIINESDVFSWVIRREFQELHHLVDEEKARCLEGVESHTRGLVASLDMQLEQAQGTQERLAQAERVLEQFGNESHHEFIRFHSITSRGEVQQARPLEGVFSPISFKPALHQADIKLTVWKRLFRKVLPAPESLKLDPATAHPLLELSKGNTVVHCGLLAQRRASQPERFDYSTCVLASKGFSWGRHYWEVVVGSKSDWRLGVIKGTASRKGKLSKSPEHGVWLIGLKEGRLYEAFGCPRLPLPVAGHPHRIGVYLHYEQGELTFFDADRPDDLRALYTFQADFQGKLYPILDTCWHERGSNSLPMVLPPPSAPGHLTRAQV</sequence>
<evidence type="ECO:0000250" key="1">
    <source>
        <dbReference type="UniProtKB" id="Q810I2"/>
    </source>
</evidence>
<evidence type="ECO:0000250" key="2">
    <source>
        <dbReference type="UniProtKB" id="Q86XT4"/>
    </source>
</evidence>
<evidence type="ECO:0000255" key="3"/>
<evidence type="ECO:0000255" key="4">
    <source>
        <dbReference type="PROSITE-ProRule" id="PRU00024"/>
    </source>
</evidence>
<evidence type="ECO:0000255" key="5">
    <source>
        <dbReference type="PROSITE-ProRule" id="PRU00175"/>
    </source>
</evidence>
<evidence type="ECO:0000255" key="6">
    <source>
        <dbReference type="PROSITE-ProRule" id="PRU00548"/>
    </source>
</evidence>
<evidence type="ECO:0000305" key="7"/>
<name>TRI50_RAT</name>
<proteinExistence type="evidence at transcript level"/>
<organism>
    <name type="scientific">Rattus norvegicus</name>
    <name type="common">Rat</name>
    <dbReference type="NCBI Taxonomy" id="10116"/>
    <lineage>
        <taxon>Eukaryota</taxon>
        <taxon>Metazoa</taxon>
        <taxon>Chordata</taxon>
        <taxon>Craniata</taxon>
        <taxon>Vertebrata</taxon>
        <taxon>Euteleostomi</taxon>
        <taxon>Mammalia</taxon>
        <taxon>Eutheria</taxon>
        <taxon>Euarchontoglires</taxon>
        <taxon>Glires</taxon>
        <taxon>Rodentia</taxon>
        <taxon>Myomorpha</taxon>
        <taxon>Muroidea</taxon>
        <taxon>Muridae</taxon>
        <taxon>Murinae</taxon>
        <taxon>Rattus</taxon>
    </lineage>
</organism>